<sequence length="162" mass="18312">MEIQGTRFGTLEFDEKEIIYLNEGLLGFPLSKQFLMFPYGEDSSFFWLQSVDEPEIAFIVINPFDFFSDLEFAVEDEDASSLVLARSEDVEIFTLVTIPEGRPEEMRTNLAGPVVVNVQNRLGKQILCKDYSPRQPLIPDSMRSQLKEQARSSKGGHVAGGR</sequence>
<keyword id="KW-1005">Bacterial flagellum biogenesis</keyword>
<keyword id="KW-0143">Chaperone</keyword>
<keyword id="KW-0963">Cytoplasm</keyword>
<keyword id="KW-1185">Reference proteome</keyword>
<keyword id="KW-0810">Translation regulation</keyword>
<dbReference type="EMBL" id="CP000471">
    <property type="protein sequence ID" value="ABK42610.1"/>
    <property type="molecule type" value="Genomic_DNA"/>
</dbReference>
<dbReference type="RefSeq" id="WP_011711783.1">
    <property type="nucleotide sequence ID" value="NC_008576.1"/>
</dbReference>
<dbReference type="SMR" id="A0L3R7"/>
<dbReference type="STRING" id="156889.Mmc1_0081"/>
<dbReference type="KEGG" id="mgm:Mmc1_0081"/>
<dbReference type="eggNOG" id="COG1699">
    <property type="taxonomic scope" value="Bacteria"/>
</dbReference>
<dbReference type="HOGENOM" id="CLU_112356_0_2_5"/>
<dbReference type="OrthoDB" id="9801235at2"/>
<dbReference type="Proteomes" id="UP000002586">
    <property type="component" value="Chromosome"/>
</dbReference>
<dbReference type="GO" id="GO:0005737">
    <property type="term" value="C:cytoplasm"/>
    <property type="evidence" value="ECO:0007669"/>
    <property type="project" value="UniProtKB-SubCell"/>
</dbReference>
<dbReference type="GO" id="GO:0044780">
    <property type="term" value="P:bacterial-type flagellum assembly"/>
    <property type="evidence" value="ECO:0007669"/>
    <property type="project" value="UniProtKB-UniRule"/>
</dbReference>
<dbReference type="GO" id="GO:0006417">
    <property type="term" value="P:regulation of translation"/>
    <property type="evidence" value="ECO:0007669"/>
    <property type="project" value="UniProtKB-KW"/>
</dbReference>
<dbReference type="Gene3D" id="2.30.290.10">
    <property type="entry name" value="BH3618-like"/>
    <property type="match status" value="1"/>
</dbReference>
<dbReference type="HAMAP" id="MF_01185">
    <property type="entry name" value="FliW"/>
    <property type="match status" value="1"/>
</dbReference>
<dbReference type="InterPro" id="IPR003775">
    <property type="entry name" value="Flagellar_assembly_factor_FliW"/>
</dbReference>
<dbReference type="InterPro" id="IPR024046">
    <property type="entry name" value="Flagellar_assmbl_FliW_dom_sf"/>
</dbReference>
<dbReference type="PANTHER" id="PTHR39190">
    <property type="entry name" value="FLAGELLAR ASSEMBLY FACTOR FLIW"/>
    <property type="match status" value="1"/>
</dbReference>
<dbReference type="PANTHER" id="PTHR39190:SF1">
    <property type="entry name" value="FLAGELLAR ASSEMBLY FACTOR FLIW"/>
    <property type="match status" value="1"/>
</dbReference>
<dbReference type="Pfam" id="PF02623">
    <property type="entry name" value="FliW"/>
    <property type="match status" value="1"/>
</dbReference>
<dbReference type="SUPFAM" id="SSF141457">
    <property type="entry name" value="BH3618-like"/>
    <property type="match status" value="1"/>
</dbReference>
<comment type="function">
    <text evidence="1">Acts as an anti-CsrA protein, binds CsrA and prevents it from repressing translation of its target genes, one of which is flagellin. Binds to flagellin and participates in the assembly of the flagellum.</text>
</comment>
<comment type="subunit">
    <text evidence="1">Interacts with translational regulator CsrA and flagellin(s).</text>
</comment>
<comment type="subcellular location">
    <subcellularLocation>
        <location evidence="1">Cytoplasm</location>
    </subcellularLocation>
</comment>
<comment type="similarity">
    <text evidence="1">Belongs to the FliW family.</text>
</comment>
<accession>A0L3R7</accession>
<proteinExistence type="inferred from homology"/>
<protein>
    <recommendedName>
        <fullName evidence="1">Flagellar assembly factor FliW</fullName>
    </recommendedName>
</protein>
<name>FLIW_MAGMM</name>
<reference key="1">
    <citation type="journal article" date="2009" name="Appl. Environ. Microbiol.">
        <title>Complete genome sequence of the chemolithoautotrophic marine magnetotactic coccus strain MC-1.</title>
        <authorList>
            <person name="Schubbe S."/>
            <person name="Williams T.J."/>
            <person name="Xie G."/>
            <person name="Kiss H.E."/>
            <person name="Brettin T.S."/>
            <person name="Martinez D."/>
            <person name="Ross C.A."/>
            <person name="Schuler D."/>
            <person name="Cox B.L."/>
            <person name="Nealson K.H."/>
            <person name="Bazylinski D.A."/>
        </authorList>
    </citation>
    <scope>NUCLEOTIDE SEQUENCE [LARGE SCALE GENOMIC DNA]</scope>
    <source>
        <strain>ATCC BAA-1437 / JCM 17883 / MC-1</strain>
    </source>
</reference>
<gene>
    <name evidence="1" type="primary">fliW</name>
    <name type="ordered locus">Mmc1_0081</name>
</gene>
<feature type="chain" id="PRO_1000065821" description="Flagellar assembly factor FliW">
    <location>
        <begin position="1"/>
        <end position="162"/>
    </location>
</feature>
<organism>
    <name type="scientific">Magnetococcus marinus (strain ATCC BAA-1437 / JCM 17883 / MC-1)</name>
    <dbReference type="NCBI Taxonomy" id="156889"/>
    <lineage>
        <taxon>Bacteria</taxon>
        <taxon>Pseudomonadati</taxon>
        <taxon>Pseudomonadota</taxon>
        <taxon>Alphaproteobacteria</taxon>
        <taxon>Magnetococcales</taxon>
        <taxon>Magnetococcaceae</taxon>
        <taxon>Magnetococcus</taxon>
    </lineage>
</organism>
<evidence type="ECO:0000255" key="1">
    <source>
        <dbReference type="HAMAP-Rule" id="MF_01185"/>
    </source>
</evidence>